<name>HYPA_SHESR</name>
<accession>Q0HUQ2</accession>
<reference key="1">
    <citation type="submission" date="2006-08" db="EMBL/GenBank/DDBJ databases">
        <title>Complete sequence of chromosome 1 of Shewanella sp. MR-7.</title>
        <authorList>
            <person name="Copeland A."/>
            <person name="Lucas S."/>
            <person name="Lapidus A."/>
            <person name="Barry K."/>
            <person name="Detter J.C."/>
            <person name="Glavina del Rio T."/>
            <person name="Hammon N."/>
            <person name="Israni S."/>
            <person name="Dalin E."/>
            <person name="Tice H."/>
            <person name="Pitluck S."/>
            <person name="Kiss H."/>
            <person name="Brettin T."/>
            <person name="Bruce D."/>
            <person name="Han C."/>
            <person name="Tapia R."/>
            <person name="Gilna P."/>
            <person name="Schmutz J."/>
            <person name="Larimer F."/>
            <person name="Land M."/>
            <person name="Hauser L."/>
            <person name="Kyrpides N."/>
            <person name="Mikhailova N."/>
            <person name="Nealson K."/>
            <person name="Konstantinidis K."/>
            <person name="Klappenbach J."/>
            <person name="Tiedje J."/>
            <person name="Richardson P."/>
        </authorList>
    </citation>
    <scope>NUCLEOTIDE SEQUENCE [LARGE SCALE GENOMIC DNA]</scope>
    <source>
        <strain>MR-7</strain>
    </source>
</reference>
<keyword id="KW-0479">Metal-binding</keyword>
<keyword id="KW-0533">Nickel</keyword>
<keyword id="KW-0862">Zinc</keyword>
<comment type="function">
    <text evidence="1">Involved in the maturation of [NiFe] hydrogenases. Required for nickel insertion into the metal center of the hydrogenase.</text>
</comment>
<comment type="similarity">
    <text evidence="1">Belongs to the HypA/HybF family.</text>
</comment>
<gene>
    <name evidence="1" type="primary">hypA</name>
    <name type="ordered locus">Shewmr7_2165</name>
</gene>
<protein>
    <recommendedName>
        <fullName evidence="1">Hydrogenase maturation factor HypA</fullName>
    </recommendedName>
</protein>
<organism>
    <name type="scientific">Shewanella sp. (strain MR-7)</name>
    <dbReference type="NCBI Taxonomy" id="60481"/>
    <lineage>
        <taxon>Bacteria</taxon>
        <taxon>Pseudomonadati</taxon>
        <taxon>Pseudomonadota</taxon>
        <taxon>Gammaproteobacteria</taxon>
        <taxon>Alteromonadales</taxon>
        <taxon>Shewanellaceae</taxon>
        <taxon>Shewanella</taxon>
    </lineage>
</organism>
<evidence type="ECO:0000255" key="1">
    <source>
        <dbReference type="HAMAP-Rule" id="MF_00213"/>
    </source>
</evidence>
<dbReference type="EMBL" id="CP000444">
    <property type="protein sequence ID" value="ABI43153.1"/>
    <property type="molecule type" value="Genomic_DNA"/>
</dbReference>
<dbReference type="SMR" id="Q0HUQ2"/>
<dbReference type="KEGG" id="shm:Shewmr7_2165"/>
<dbReference type="HOGENOM" id="CLU_126929_6_0_6"/>
<dbReference type="GO" id="GO:0016151">
    <property type="term" value="F:nickel cation binding"/>
    <property type="evidence" value="ECO:0007669"/>
    <property type="project" value="UniProtKB-UniRule"/>
</dbReference>
<dbReference type="GO" id="GO:0008270">
    <property type="term" value="F:zinc ion binding"/>
    <property type="evidence" value="ECO:0007669"/>
    <property type="project" value="UniProtKB-UniRule"/>
</dbReference>
<dbReference type="GO" id="GO:0051604">
    <property type="term" value="P:protein maturation"/>
    <property type="evidence" value="ECO:0007669"/>
    <property type="project" value="InterPro"/>
</dbReference>
<dbReference type="GO" id="GO:0036211">
    <property type="term" value="P:protein modification process"/>
    <property type="evidence" value="ECO:0007669"/>
    <property type="project" value="UniProtKB-UniRule"/>
</dbReference>
<dbReference type="Gene3D" id="3.30.2320.80">
    <property type="match status" value="1"/>
</dbReference>
<dbReference type="HAMAP" id="MF_00213">
    <property type="entry name" value="HypA_HybF"/>
    <property type="match status" value="1"/>
</dbReference>
<dbReference type="InterPro" id="IPR000688">
    <property type="entry name" value="HypA/HybF"/>
</dbReference>
<dbReference type="InterPro" id="IPR036280">
    <property type="entry name" value="Multihaem_cyt_sf"/>
</dbReference>
<dbReference type="NCBIfam" id="TIGR00100">
    <property type="entry name" value="hypA"/>
    <property type="match status" value="1"/>
</dbReference>
<dbReference type="NCBIfam" id="NF001839">
    <property type="entry name" value="PRK00564.1"/>
    <property type="match status" value="1"/>
</dbReference>
<dbReference type="PANTHER" id="PTHR34535">
    <property type="entry name" value="HYDROGENASE MATURATION FACTOR HYPA"/>
    <property type="match status" value="1"/>
</dbReference>
<dbReference type="PANTHER" id="PTHR34535:SF3">
    <property type="entry name" value="HYDROGENASE MATURATION FACTOR HYPA"/>
    <property type="match status" value="1"/>
</dbReference>
<dbReference type="Pfam" id="PF01155">
    <property type="entry name" value="HypA"/>
    <property type="match status" value="1"/>
</dbReference>
<dbReference type="PIRSF" id="PIRSF004761">
    <property type="entry name" value="Hydrgn_mat_HypA"/>
    <property type="match status" value="1"/>
</dbReference>
<dbReference type="SUPFAM" id="SSF48695">
    <property type="entry name" value="Multiheme cytochromes"/>
    <property type="match status" value="1"/>
</dbReference>
<sequence length="118" mass="13415">MHEYSIVSALIEQCEQHAKANRANKITRVDIKLGVMSGVEPALLETAFETFKLDGICRDAELRMTLQPLVIACLDCHQESELTERSIVCPACHSYHTRVLDGEDMLLMQLEMEQEDEH</sequence>
<feature type="chain" id="PRO_1000023859" description="Hydrogenase maturation factor HypA">
    <location>
        <begin position="1"/>
        <end position="118"/>
    </location>
</feature>
<feature type="binding site" evidence="1">
    <location>
        <position position="2"/>
    </location>
    <ligand>
        <name>Ni(2+)</name>
        <dbReference type="ChEBI" id="CHEBI:49786"/>
    </ligand>
</feature>
<feature type="binding site" evidence="1">
    <location>
        <position position="73"/>
    </location>
    <ligand>
        <name>Zn(2+)</name>
        <dbReference type="ChEBI" id="CHEBI:29105"/>
    </ligand>
</feature>
<feature type="binding site" evidence="1">
    <location>
        <position position="76"/>
    </location>
    <ligand>
        <name>Zn(2+)</name>
        <dbReference type="ChEBI" id="CHEBI:29105"/>
    </ligand>
</feature>
<feature type="binding site" evidence="1">
    <location>
        <position position="89"/>
    </location>
    <ligand>
        <name>Zn(2+)</name>
        <dbReference type="ChEBI" id="CHEBI:29105"/>
    </ligand>
</feature>
<feature type="binding site" evidence="1">
    <location>
        <position position="92"/>
    </location>
    <ligand>
        <name>Zn(2+)</name>
        <dbReference type="ChEBI" id="CHEBI:29105"/>
    </ligand>
</feature>
<proteinExistence type="inferred from homology"/>